<proteinExistence type="evidence at protein level"/>
<reference key="1">
    <citation type="submission" date="2005-08" db="EMBL/GenBank/DDBJ databases">
        <authorList>
            <consortium name="NIH - Mammalian Gene Collection (MGC) project"/>
        </authorList>
    </citation>
    <scope>NUCLEOTIDE SEQUENCE [LARGE SCALE MRNA]</scope>
    <source>
        <strain>Hereford</strain>
        <tissue>Heart ventricle</tissue>
    </source>
</reference>
<reference key="2">
    <citation type="journal article" date="1992" name="J. Biol. Chem.">
        <title>Molecular cloning and characterization of (R)-3-hydroxybutyrate dehydrogenase from human heart.</title>
        <authorList>
            <person name="Marks A.R."/>
            <person name="McIntyre J.O."/>
            <person name="Duncan T.M."/>
            <person name="Erdjument-Bromage H."/>
            <person name="Tempst P."/>
            <person name="Fleischer S."/>
        </authorList>
    </citation>
    <scope>PROTEIN SEQUENCE OF 47-89; 138-174; 213-231; 233-259; 285-322 AND 331-344</scope>
    <source>
        <tissue>Heart</tissue>
    </source>
</reference>
<reference key="3">
    <citation type="journal article" date="1986" name="Biochem. Int.">
        <title>Amino acid sequences of two tryptic peptides from D(-)-beta-hydroxybutyrate dehydrogenase radiolabeled at essential carboxyl and sulfhydryl groups.</title>
        <authorList>
            <person name="Prasad P.V."/>
            <person name="Hatefi Y."/>
        </authorList>
    </citation>
    <scope>PROTEIN SEQUENCE OF 163-174 AND 285-301</scope>
    <source>
        <tissue>Heart</tissue>
    </source>
</reference>
<reference key="4">
    <citation type="journal article" date="1978" name="Biochim. Biophys. Acta">
        <title>The orientation of D-beta-hydroxybutyrate dehydrogenase in the mitochondrial inner membrane.</title>
        <authorList>
            <person name="McIntyre J.O."/>
            <person name="Bock H.G."/>
            <person name="Fleischer S."/>
        </authorList>
    </citation>
    <scope>SUBCELLULAR LOCATION</scope>
</reference>
<reference key="5">
    <citation type="journal article" date="1983" name="J. Biol. Chem.">
        <title>Target size of D-beta-hydroxybutyrate dehydrogenase. Functional and structural molecular weight based on radiation inactivation.</title>
        <authorList>
            <person name="McIntyre J.O."/>
            <person name="Churchill P."/>
            <person name="Maurer A."/>
            <person name="Berenski C.J."/>
            <person name="Jung C.Y."/>
            <person name="Fleischer S."/>
        </authorList>
    </citation>
    <scope>SUBUNIT</scope>
</reference>
<reference key="6">
    <citation type="journal article" date="1989" name="Biochemistry">
        <title>Coenzyme binding by 3-hydroxybutyrate dehydrogenase, a lipid-requiring enzyme: lecithin acts as an allosteric modulator to enhance the affinity for coenzyme.</title>
        <authorList>
            <person name="Rudy B."/>
            <person name="Dubois H."/>
            <person name="Mink R."/>
            <person name="Trommer W.E."/>
            <person name="McIntyre J.O."/>
            <person name="Fleischer S."/>
        </authorList>
    </citation>
    <scope>ACTIVITY REGULATION</scope>
</reference>
<organism>
    <name type="scientific">Bos taurus</name>
    <name type="common">Bovine</name>
    <dbReference type="NCBI Taxonomy" id="9913"/>
    <lineage>
        <taxon>Eukaryota</taxon>
        <taxon>Metazoa</taxon>
        <taxon>Chordata</taxon>
        <taxon>Craniata</taxon>
        <taxon>Vertebrata</taxon>
        <taxon>Euteleostomi</taxon>
        <taxon>Mammalia</taxon>
        <taxon>Eutheria</taxon>
        <taxon>Laurasiatheria</taxon>
        <taxon>Artiodactyla</taxon>
        <taxon>Ruminantia</taxon>
        <taxon>Pecora</taxon>
        <taxon>Bovidae</taxon>
        <taxon>Bovinae</taxon>
        <taxon>Bos</taxon>
    </lineage>
</organism>
<protein>
    <recommendedName>
        <fullName evidence="11">D-beta-hydroxybutyrate dehydrogenase, mitochondrial</fullName>
        <ecNumber evidence="2">1.1.1.30</ecNumber>
    </recommendedName>
    <alternativeName>
        <fullName evidence="10">3-hydroxybutyrate dehydrogenase</fullName>
        <shortName evidence="10">BDH</shortName>
    </alternativeName>
</protein>
<keyword id="KW-0007">Acetylation</keyword>
<keyword id="KW-0021">Allosteric enzyme</keyword>
<keyword id="KW-0903">Direct protein sequencing</keyword>
<keyword id="KW-0325">Glycoprotein</keyword>
<keyword id="KW-0443">Lipid metabolism</keyword>
<keyword id="KW-0472">Membrane</keyword>
<keyword id="KW-0496">Mitochondrion</keyword>
<keyword id="KW-0999">Mitochondrion inner membrane</keyword>
<keyword id="KW-0520">NAD</keyword>
<keyword id="KW-0560">Oxidoreductase</keyword>
<keyword id="KW-0597">Phosphoprotein</keyword>
<keyword id="KW-1185">Reference proteome</keyword>
<keyword id="KW-0809">Transit peptide</keyword>
<gene>
    <name evidence="3" type="primary">BDH1</name>
    <name evidence="10" type="synonym">BDH</name>
</gene>
<accession>Q02337</accession>
<accession>Q3ZBX3</accession>
<sequence length="344" mass="38391">MLTARLSRPLSQLPRKTLNFSDRENGTRGSLLLYSAPFVPVGRRTYAASVDPVGSKAVLITGCDSGFGFSLAKHLHSEGFLVFAGCLMKDKGSDGVKELDSMKSDRLRTVQLNVCKSEEVDKAAEVIRSSLEDPEKGLWGLVNNAGISTFGDVEFTSMETYKEVAEVNLWGTVRVTKAFLPLIRRAKGRVVNISSMMGRMANVARSPYCITKFGVEAFSDCLRYEMHPLGVKVSVVEPGNFIAATSLYGGTERIQAIANKMWEELPEVVRQDYGRKYFDEKVARMESYCTSGSTDTSPVIKAVTHALTATTPYTRYHPMDYYWWLRMQIMTHFPGAISDRIYIH</sequence>
<feature type="transit peptide" description="Mitochondrion" evidence="6">
    <location>
        <begin position="1"/>
        <end position="46"/>
    </location>
</feature>
<feature type="chain" id="PRO_0000054526" description="D-beta-hydroxybutyrate dehydrogenase, mitochondrial">
    <location>
        <begin position="47"/>
        <end position="344"/>
    </location>
</feature>
<feature type="active site" description="Proton acceptor" evidence="5">
    <location>
        <position position="208"/>
    </location>
</feature>
<feature type="binding site" evidence="1">
    <location>
        <begin position="59"/>
        <end position="83"/>
    </location>
    <ligand>
        <name>NAD(+)</name>
        <dbReference type="ChEBI" id="CHEBI:57540"/>
    </ligand>
</feature>
<feature type="binding site" evidence="1">
    <location>
        <position position="195"/>
    </location>
    <ligand>
        <name>substrate</name>
    </ligand>
</feature>
<feature type="modified residue" description="N6-acetyllysine" evidence="4">
    <location>
        <position position="73"/>
    </location>
</feature>
<feature type="modified residue" description="N6-acetyllysine" evidence="4">
    <location>
        <position position="97"/>
    </location>
</feature>
<feature type="modified residue" description="N6-acetyllysine; alternate" evidence="4">
    <location>
        <position position="103"/>
    </location>
</feature>
<feature type="modified residue" description="N6-succinyllysine; alternate" evidence="4">
    <location>
        <position position="103"/>
    </location>
</feature>
<feature type="modified residue" description="N6-acetyllysine" evidence="4">
    <location>
        <position position="177"/>
    </location>
</feature>
<feature type="modified residue" description="N6-acetyllysine" evidence="4">
    <location>
        <position position="212"/>
    </location>
</feature>
<feature type="modified residue" description="Phosphoserine" evidence="2">
    <location>
        <position position="246"/>
    </location>
</feature>
<feature type="modified residue" description="N6-acetyllysine; alternate" evidence="4">
    <location>
        <position position="260"/>
    </location>
</feature>
<feature type="modified residue" description="N6-succinyllysine; alternate" evidence="4">
    <location>
        <position position="260"/>
    </location>
</feature>
<feature type="modified residue" description="N6-acetyllysine" evidence="4">
    <location>
        <position position="281"/>
    </location>
</feature>
<feature type="glycosylation site" description="O-linked (GlcNAc) serine" evidence="1">
    <location>
        <position position="219"/>
    </location>
</feature>
<evidence type="ECO:0000250" key="1"/>
<evidence type="ECO:0000250" key="2">
    <source>
        <dbReference type="UniProtKB" id="P29147"/>
    </source>
</evidence>
<evidence type="ECO:0000250" key="3">
    <source>
        <dbReference type="UniProtKB" id="Q02338"/>
    </source>
</evidence>
<evidence type="ECO:0000250" key="4">
    <source>
        <dbReference type="UniProtKB" id="Q80XN0"/>
    </source>
</evidence>
<evidence type="ECO:0000255" key="5">
    <source>
        <dbReference type="PROSITE-ProRule" id="PRU10001"/>
    </source>
</evidence>
<evidence type="ECO:0000269" key="6">
    <source>
    </source>
</evidence>
<evidence type="ECO:0000269" key="7">
    <source>
    </source>
</evidence>
<evidence type="ECO:0000269" key="8">
    <source>
    </source>
</evidence>
<evidence type="ECO:0000269" key="9">
    <source>
    </source>
</evidence>
<evidence type="ECO:0000303" key="10">
    <source>
    </source>
</evidence>
<evidence type="ECO:0000305" key="11"/>
<name>BDH_BOVIN</name>
<comment type="catalytic activity">
    <reaction evidence="2">
        <text>(R)-3-hydroxybutanoate + NAD(+) = acetoacetate + NADH + H(+)</text>
        <dbReference type="Rhea" id="RHEA:20521"/>
        <dbReference type="ChEBI" id="CHEBI:10983"/>
        <dbReference type="ChEBI" id="CHEBI:13705"/>
        <dbReference type="ChEBI" id="CHEBI:15378"/>
        <dbReference type="ChEBI" id="CHEBI:57540"/>
        <dbReference type="ChEBI" id="CHEBI:57945"/>
        <dbReference type="EC" id="1.1.1.30"/>
    </reaction>
</comment>
<comment type="activity regulation">
    <text evidence="7">Requires phosphatidylcholine as an allosteric activator for enzymatic activity.</text>
</comment>
<comment type="subunit">
    <text evidence="8">Homotetramer.</text>
</comment>
<comment type="subcellular location">
    <subcellularLocation>
        <location evidence="9">Mitochondrion inner membrane</location>
    </subcellularLocation>
    <subcellularLocation>
        <location evidence="9">Mitochondrion matrix</location>
    </subcellularLocation>
</comment>
<comment type="similarity">
    <text evidence="11">Belongs to the short-chain dehydrogenases/reductases (SDR) family.</text>
</comment>
<dbReference type="EC" id="1.1.1.30" evidence="2"/>
<dbReference type="EMBL" id="BC103051">
    <property type="protein sequence ID" value="AAI03052.1"/>
    <property type="molecule type" value="mRNA"/>
</dbReference>
<dbReference type="PIR" id="B42845">
    <property type="entry name" value="B42845"/>
</dbReference>
<dbReference type="RefSeq" id="NP_001029772.1">
    <property type="nucleotide sequence ID" value="NM_001034600.2"/>
</dbReference>
<dbReference type="RefSeq" id="XP_005201561.4">
    <property type="nucleotide sequence ID" value="XM_005201504.5"/>
</dbReference>
<dbReference type="RefSeq" id="XP_005201562.1">
    <property type="nucleotide sequence ID" value="XM_005201505.5"/>
</dbReference>
<dbReference type="RefSeq" id="XP_059741304.1">
    <property type="nucleotide sequence ID" value="XM_059885321.1"/>
</dbReference>
<dbReference type="SMR" id="Q02337"/>
<dbReference type="FunCoup" id="Q02337">
    <property type="interactions" value="331"/>
</dbReference>
<dbReference type="STRING" id="9913.ENSBTAP00000000573"/>
<dbReference type="GlyCosmos" id="Q02337">
    <property type="glycosylation" value="1 site, No reported glycans"/>
</dbReference>
<dbReference type="GlyGen" id="Q02337">
    <property type="glycosylation" value="1 site"/>
</dbReference>
<dbReference type="PaxDb" id="9913-ENSBTAP00000000573"/>
<dbReference type="PeptideAtlas" id="Q02337"/>
<dbReference type="GeneID" id="534090"/>
<dbReference type="KEGG" id="bta:534090"/>
<dbReference type="CTD" id="622"/>
<dbReference type="VEuPathDB" id="HostDB:ENSBTAG00000000448"/>
<dbReference type="eggNOG" id="KOG1610">
    <property type="taxonomic scope" value="Eukaryota"/>
</dbReference>
<dbReference type="HOGENOM" id="CLU_010194_2_0_1"/>
<dbReference type="InParanoid" id="Q02337"/>
<dbReference type="OMA" id="CAHWVAL"/>
<dbReference type="OrthoDB" id="2102561at2759"/>
<dbReference type="TreeFam" id="TF325617"/>
<dbReference type="Reactome" id="R-BTA-77108">
    <property type="pathway name" value="Utilization of Ketone Bodies"/>
</dbReference>
<dbReference type="Reactome" id="R-BTA-77111">
    <property type="pathway name" value="Synthesis of Ketone Bodies"/>
</dbReference>
<dbReference type="Reactome" id="R-BTA-9837999">
    <property type="pathway name" value="Mitochondrial protein degradation"/>
</dbReference>
<dbReference type="SABIO-RK" id="Q02337"/>
<dbReference type="Proteomes" id="UP000009136">
    <property type="component" value="Chromosome 1"/>
</dbReference>
<dbReference type="Bgee" id="ENSBTAG00000000448">
    <property type="expression patterns" value="Expressed in ruminant reticulum and 106 other cell types or tissues"/>
</dbReference>
<dbReference type="GO" id="GO:0043231">
    <property type="term" value="C:intracellular membrane-bounded organelle"/>
    <property type="evidence" value="ECO:0000318"/>
    <property type="project" value="GO_Central"/>
</dbReference>
<dbReference type="GO" id="GO:0099617">
    <property type="term" value="C:matrix side of mitochondrial inner membrane"/>
    <property type="evidence" value="ECO:0000314"/>
    <property type="project" value="UniProtKB"/>
</dbReference>
<dbReference type="GO" id="GO:0005759">
    <property type="term" value="C:mitochondrial matrix"/>
    <property type="evidence" value="ECO:0007669"/>
    <property type="project" value="UniProtKB-SubCell"/>
</dbReference>
<dbReference type="GO" id="GO:0003858">
    <property type="term" value="F:3-hydroxybutyrate dehydrogenase activity"/>
    <property type="evidence" value="ECO:0000314"/>
    <property type="project" value="UniProtKB"/>
</dbReference>
<dbReference type="GO" id="GO:0008202">
    <property type="term" value="P:steroid metabolic process"/>
    <property type="evidence" value="ECO:0000318"/>
    <property type="project" value="GO_Central"/>
</dbReference>
<dbReference type="CDD" id="cd09805">
    <property type="entry name" value="type2_17beta_HSD-like_SDR_c"/>
    <property type="match status" value="1"/>
</dbReference>
<dbReference type="FunFam" id="3.40.50.720:FF:000074">
    <property type="entry name" value="Retinol dehydrogenase type 1"/>
    <property type="match status" value="1"/>
</dbReference>
<dbReference type="Gene3D" id="3.40.50.720">
    <property type="entry name" value="NAD(P)-binding Rossmann-like Domain"/>
    <property type="match status" value="1"/>
</dbReference>
<dbReference type="InterPro" id="IPR036291">
    <property type="entry name" value="NAD(P)-bd_dom_sf"/>
</dbReference>
<dbReference type="InterPro" id="IPR020904">
    <property type="entry name" value="Sc_DH/Rdtase_CS"/>
</dbReference>
<dbReference type="InterPro" id="IPR002347">
    <property type="entry name" value="SDR_fam"/>
</dbReference>
<dbReference type="PANTHER" id="PTHR43313:SF25">
    <property type="entry name" value="D-BETA-HYDROXYBUTYRATE DEHYDROGENASE, MITOCHONDRIAL"/>
    <property type="match status" value="1"/>
</dbReference>
<dbReference type="PANTHER" id="PTHR43313">
    <property type="entry name" value="SHORT-CHAIN DEHYDROGENASE/REDUCTASE FAMILY 9C"/>
    <property type="match status" value="1"/>
</dbReference>
<dbReference type="Pfam" id="PF00106">
    <property type="entry name" value="adh_short"/>
    <property type="match status" value="1"/>
</dbReference>
<dbReference type="PRINTS" id="PR00081">
    <property type="entry name" value="GDHRDH"/>
</dbReference>
<dbReference type="PRINTS" id="PR00080">
    <property type="entry name" value="SDRFAMILY"/>
</dbReference>
<dbReference type="SUPFAM" id="SSF51735">
    <property type="entry name" value="NAD(P)-binding Rossmann-fold domains"/>
    <property type="match status" value="1"/>
</dbReference>
<dbReference type="PROSITE" id="PS00061">
    <property type="entry name" value="ADH_SHORT"/>
    <property type="match status" value="1"/>
</dbReference>